<protein>
    <recommendedName>
        <fullName>Homeobox protein BarH-like 2</fullName>
    </recommendedName>
</protein>
<name>BARX2_SHEEP</name>
<gene>
    <name type="primary">BARX2</name>
</gene>
<organism>
    <name type="scientific">Ovis aries</name>
    <name type="common">Sheep</name>
    <dbReference type="NCBI Taxonomy" id="9940"/>
    <lineage>
        <taxon>Eukaryota</taxon>
        <taxon>Metazoa</taxon>
        <taxon>Chordata</taxon>
        <taxon>Craniata</taxon>
        <taxon>Vertebrata</taxon>
        <taxon>Euteleostomi</taxon>
        <taxon>Mammalia</taxon>
        <taxon>Eutheria</taxon>
        <taxon>Laurasiatheria</taxon>
        <taxon>Artiodactyla</taxon>
        <taxon>Ruminantia</taxon>
        <taxon>Pecora</taxon>
        <taxon>Bovidae</taxon>
        <taxon>Caprinae</taxon>
        <taxon>Ovis</taxon>
    </lineage>
</organism>
<accession>Q9N0M2</accession>
<evidence type="ECO:0000255" key="1">
    <source>
        <dbReference type="PROSITE-ProRule" id="PRU00108"/>
    </source>
</evidence>
<evidence type="ECO:0000256" key="2">
    <source>
        <dbReference type="SAM" id="MobiDB-lite"/>
    </source>
</evidence>
<evidence type="ECO:0000305" key="3"/>
<sequence>ELEKEFQKQKYLSTPDRLDLAQSLGLTQLQVKTWYQNRRMKWKKMVLKGGQEAPTKPKGRPKKNSIPTSEEIEAEEKLNSQVQSQELREPSQGLEGLCDTQEPKARVVPVEVAESPGQAQELPVTSPEPPPSS</sequence>
<keyword id="KW-0238">DNA-binding</keyword>
<keyword id="KW-0371">Homeobox</keyword>
<keyword id="KW-0539">Nucleus</keyword>
<keyword id="KW-1185">Reference proteome</keyword>
<keyword id="KW-0804">Transcription</keyword>
<keyword id="KW-0805">Transcription regulation</keyword>
<dbReference type="EMBL" id="AF265552">
    <property type="protein sequence ID" value="AAF73466.1"/>
    <property type="molecule type" value="mRNA"/>
</dbReference>
<dbReference type="SMR" id="Q9N0M2"/>
<dbReference type="STRING" id="9940.ENSOARP00000014523"/>
<dbReference type="PaxDb" id="9940-ENSOARP00000014523"/>
<dbReference type="eggNOG" id="KOG0488">
    <property type="taxonomic scope" value="Eukaryota"/>
</dbReference>
<dbReference type="Proteomes" id="UP000002356">
    <property type="component" value="Unplaced"/>
</dbReference>
<dbReference type="GO" id="GO:0005634">
    <property type="term" value="C:nucleus"/>
    <property type="evidence" value="ECO:0007669"/>
    <property type="project" value="UniProtKB-SubCell"/>
</dbReference>
<dbReference type="GO" id="GO:0003677">
    <property type="term" value="F:DNA binding"/>
    <property type="evidence" value="ECO:0007669"/>
    <property type="project" value="UniProtKB-KW"/>
</dbReference>
<dbReference type="GO" id="GO:0000981">
    <property type="term" value="F:DNA-binding transcription factor activity, RNA polymerase II-specific"/>
    <property type="evidence" value="ECO:0007669"/>
    <property type="project" value="InterPro"/>
</dbReference>
<dbReference type="CDD" id="cd00086">
    <property type="entry name" value="homeodomain"/>
    <property type="match status" value="1"/>
</dbReference>
<dbReference type="Gene3D" id="1.10.10.60">
    <property type="entry name" value="Homeodomain-like"/>
    <property type="match status" value="1"/>
</dbReference>
<dbReference type="InterPro" id="IPR001356">
    <property type="entry name" value="HD"/>
</dbReference>
<dbReference type="InterPro" id="IPR020479">
    <property type="entry name" value="HD_metazoa"/>
</dbReference>
<dbReference type="InterPro" id="IPR017970">
    <property type="entry name" value="Homeobox_CS"/>
</dbReference>
<dbReference type="InterPro" id="IPR050848">
    <property type="entry name" value="Homeobox_TF"/>
</dbReference>
<dbReference type="InterPro" id="IPR009057">
    <property type="entry name" value="Homeodomain-like_sf"/>
</dbReference>
<dbReference type="InterPro" id="IPR000047">
    <property type="entry name" value="HTH_motif"/>
</dbReference>
<dbReference type="PANTHER" id="PTHR24333:SF15">
    <property type="entry name" value="BARX HOMEOBOX 2"/>
    <property type="match status" value="1"/>
</dbReference>
<dbReference type="PANTHER" id="PTHR24333">
    <property type="entry name" value="HOMEO BOX HB9 LIKE A-RELATED"/>
    <property type="match status" value="1"/>
</dbReference>
<dbReference type="Pfam" id="PF00046">
    <property type="entry name" value="Homeodomain"/>
    <property type="match status" value="1"/>
</dbReference>
<dbReference type="PRINTS" id="PR00024">
    <property type="entry name" value="HOMEOBOX"/>
</dbReference>
<dbReference type="PRINTS" id="PR00031">
    <property type="entry name" value="HTHREPRESSR"/>
</dbReference>
<dbReference type="SMART" id="SM00389">
    <property type="entry name" value="HOX"/>
    <property type="match status" value="1"/>
</dbReference>
<dbReference type="SUPFAM" id="SSF46689">
    <property type="entry name" value="Homeodomain-like"/>
    <property type="match status" value="1"/>
</dbReference>
<dbReference type="PROSITE" id="PS00027">
    <property type="entry name" value="HOMEOBOX_1"/>
    <property type="match status" value="1"/>
</dbReference>
<dbReference type="PROSITE" id="PS50071">
    <property type="entry name" value="HOMEOBOX_2"/>
    <property type="match status" value="1"/>
</dbReference>
<comment type="function">
    <text>Transcription factor. Binds optimally to the DNA consensus sequence 5'-YYTAATGRTTTTY-3'. May control the expression of neural adhesion molecules such as L1 or Ng-CAM during embryonic development of both the central and peripherical nervous system. May be involved in controlling adhesive processes in keratinizing epithelia.</text>
</comment>
<comment type="subcellular location">
    <subcellularLocation>
        <location evidence="1">Nucleus</location>
    </subcellularLocation>
</comment>
<comment type="tissue specificity">
    <text>Expressed in keratinizing epithelia such as wool follicle, tongue and esophagus. Expressed at low level in thymus. Not detected in spleen, skeletal muscle, brain, heart kidney, liver and lung.</text>
</comment>
<comment type="developmental stage">
    <text>Uniformly expressed in the embryonic ectoderm but is transiently down-regulated during the initiation of wool follicle morphogenesis. Subsequently expressed throughout the epithelial component of the developing follicle except for a small group of cells at the leading edge of the follicle placode. In adult follicles, expressed throughout the outer root sheath but not in the inner root sheath or hair shaft, or in dermal cells associated with the follicle.</text>
</comment>
<comment type="similarity">
    <text evidence="3">Belongs to the BAR homeobox family.</text>
</comment>
<proteinExistence type="evidence at transcript level"/>
<feature type="chain" id="PRO_0000048840" description="Homeobox protein BarH-like 2">
    <location>
        <begin position="1" status="less than"/>
        <end position="133"/>
    </location>
</feature>
<feature type="DNA-binding region" description="Homeobox" evidence="1">
    <location>
        <begin position="1" status="less than"/>
        <end position="46"/>
    </location>
</feature>
<feature type="region of interest" description="Disordered" evidence="2">
    <location>
        <begin position="45"/>
        <end position="133"/>
    </location>
</feature>
<feature type="non-terminal residue">
    <location>
        <position position="1"/>
    </location>
</feature>
<reference key="1">
    <citation type="journal article" date="2000" name="J. Invest. Dermatol.">
        <title>Communications: expression of the homeobox gene, barx2, in wool follicle development.</title>
        <authorList>
            <person name="Sander G."/>
            <person name="Bawden C.S."/>
            <person name="Hynd P.I."/>
            <person name="Nesci A."/>
            <person name="Rogers G."/>
            <person name="Powell B.C."/>
        </authorList>
    </citation>
    <scope>NUCLEOTIDE SEQUENCE [MRNA]</scope>
    <source>
        <tissue>Wool follicle</tissue>
    </source>
</reference>